<feature type="chain" id="PRO_0000057324" description="tRNA pseudouridine synthase A 2">
    <location>
        <begin position="1"/>
        <end position="245"/>
    </location>
</feature>
<feature type="active site" description="Nucleophile" evidence="1">
    <location>
        <position position="53"/>
    </location>
</feature>
<feature type="binding site" evidence="1">
    <location>
        <position position="111"/>
    </location>
    <ligand>
        <name>substrate</name>
    </ligand>
</feature>
<gene>
    <name evidence="1" type="primary">truA2</name>
    <name type="ordered locus">BC_0471</name>
</gene>
<keyword id="KW-0413">Isomerase</keyword>
<keyword id="KW-1185">Reference proteome</keyword>
<keyword id="KW-0819">tRNA processing</keyword>
<name>TRUA2_BACCR</name>
<evidence type="ECO:0000255" key="1">
    <source>
        <dbReference type="HAMAP-Rule" id="MF_00171"/>
    </source>
</evidence>
<proteinExistence type="inferred from homology"/>
<accession>Q813Z9</accession>
<dbReference type="EC" id="5.4.99.12" evidence="1"/>
<dbReference type="EMBL" id="AE016877">
    <property type="protein sequence ID" value="AAP07510.1"/>
    <property type="molecule type" value="Genomic_DNA"/>
</dbReference>
<dbReference type="RefSeq" id="NP_830309.1">
    <property type="nucleotide sequence ID" value="NC_004722.1"/>
</dbReference>
<dbReference type="SMR" id="Q813Z9"/>
<dbReference type="STRING" id="226900.BC_0471"/>
<dbReference type="KEGG" id="bce:BC0471"/>
<dbReference type="PATRIC" id="fig|226900.8.peg.443"/>
<dbReference type="HOGENOM" id="CLU_014673_0_1_9"/>
<dbReference type="OrthoDB" id="9811823at2"/>
<dbReference type="Proteomes" id="UP000001417">
    <property type="component" value="Chromosome"/>
</dbReference>
<dbReference type="GO" id="GO:0009982">
    <property type="term" value="F:pseudouridine synthase activity"/>
    <property type="evidence" value="ECO:0000318"/>
    <property type="project" value="GO_Central"/>
</dbReference>
<dbReference type="GO" id="GO:0003723">
    <property type="term" value="F:RNA binding"/>
    <property type="evidence" value="ECO:0007669"/>
    <property type="project" value="InterPro"/>
</dbReference>
<dbReference type="GO" id="GO:0160147">
    <property type="term" value="F:tRNA pseudouridine(38-40) synthase activity"/>
    <property type="evidence" value="ECO:0007669"/>
    <property type="project" value="UniProtKB-EC"/>
</dbReference>
<dbReference type="GO" id="GO:0031119">
    <property type="term" value="P:tRNA pseudouridine synthesis"/>
    <property type="evidence" value="ECO:0000318"/>
    <property type="project" value="GO_Central"/>
</dbReference>
<dbReference type="CDD" id="cd02570">
    <property type="entry name" value="PseudoU_synth_EcTruA"/>
    <property type="match status" value="1"/>
</dbReference>
<dbReference type="FunFam" id="3.30.70.580:FF:000001">
    <property type="entry name" value="tRNA pseudouridine synthase A"/>
    <property type="match status" value="1"/>
</dbReference>
<dbReference type="Gene3D" id="3.30.70.660">
    <property type="entry name" value="Pseudouridine synthase I, catalytic domain, C-terminal subdomain"/>
    <property type="match status" value="1"/>
</dbReference>
<dbReference type="Gene3D" id="3.30.70.580">
    <property type="entry name" value="Pseudouridine synthase I, catalytic domain, N-terminal subdomain"/>
    <property type="match status" value="1"/>
</dbReference>
<dbReference type="HAMAP" id="MF_00171">
    <property type="entry name" value="TruA"/>
    <property type="match status" value="1"/>
</dbReference>
<dbReference type="InterPro" id="IPR020103">
    <property type="entry name" value="PsdUridine_synth_cat_dom_sf"/>
</dbReference>
<dbReference type="InterPro" id="IPR001406">
    <property type="entry name" value="PsdUridine_synth_TruA"/>
</dbReference>
<dbReference type="InterPro" id="IPR020097">
    <property type="entry name" value="PsdUridine_synth_TruA_a/b_dom"/>
</dbReference>
<dbReference type="InterPro" id="IPR020095">
    <property type="entry name" value="PsdUridine_synth_TruA_C"/>
</dbReference>
<dbReference type="InterPro" id="IPR020094">
    <property type="entry name" value="TruA/RsuA/RluB/E/F_N"/>
</dbReference>
<dbReference type="NCBIfam" id="TIGR00071">
    <property type="entry name" value="hisT_truA"/>
    <property type="match status" value="1"/>
</dbReference>
<dbReference type="PANTHER" id="PTHR11142">
    <property type="entry name" value="PSEUDOURIDYLATE SYNTHASE"/>
    <property type="match status" value="1"/>
</dbReference>
<dbReference type="PANTHER" id="PTHR11142:SF22">
    <property type="entry name" value="TRNA PSEUDOURIDINE SYNTHASE A 2"/>
    <property type="match status" value="1"/>
</dbReference>
<dbReference type="Pfam" id="PF01416">
    <property type="entry name" value="PseudoU_synth_1"/>
    <property type="match status" value="2"/>
</dbReference>
<dbReference type="PIRSF" id="PIRSF001430">
    <property type="entry name" value="tRNA_psdUrid_synth"/>
    <property type="match status" value="1"/>
</dbReference>
<dbReference type="SUPFAM" id="SSF55120">
    <property type="entry name" value="Pseudouridine synthase"/>
    <property type="match status" value="1"/>
</dbReference>
<reference key="1">
    <citation type="journal article" date="2003" name="Nature">
        <title>Genome sequence of Bacillus cereus and comparative analysis with Bacillus anthracis.</title>
        <authorList>
            <person name="Ivanova N."/>
            <person name="Sorokin A."/>
            <person name="Anderson I."/>
            <person name="Galleron N."/>
            <person name="Candelon B."/>
            <person name="Kapatral V."/>
            <person name="Bhattacharyya A."/>
            <person name="Reznik G."/>
            <person name="Mikhailova N."/>
            <person name="Lapidus A."/>
            <person name="Chu L."/>
            <person name="Mazur M."/>
            <person name="Goltsman E."/>
            <person name="Larsen N."/>
            <person name="D'Souza M."/>
            <person name="Walunas T."/>
            <person name="Grechkin Y."/>
            <person name="Pusch G."/>
            <person name="Haselkorn R."/>
            <person name="Fonstein M."/>
            <person name="Ehrlich S.D."/>
            <person name="Overbeek R."/>
            <person name="Kyrpides N.C."/>
        </authorList>
    </citation>
    <scope>NUCLEOTIDE SEQUENCE [LARGE SCALE GENOMIC DNA]</scope>
    <source>
        <strain>ATCC 14579 / DSM 31 / CCUG 7414 / JCM 2152 / NBRC 15305 / NCIMB 9373 / NCTC 2599 / NRRL B-3711</strain>
    </source>
</reference>
<comment type="function">
    <text evidence="1">Formation of pseudouridine at positions 38, 39 and 40 in the anticodon stem and loop of transfer RNAs.</text>
</comment>
<comment type="catalytic activity">
    <reaction evidence="1">
        <text>uridine(38/39/40) in tRNA = pseudouridine(38/39/40) in tRNA</text>
        <dbReference type="Rhea" id="RHEA:22376"/>
        <dbReference type="Rhea" id="RHEA-COMP:10085"/>
        <dbReference type="Rhea" id="RHEA-COMP:10087"/>
        <dbReference type="ChEBI" id="CHEBI:65314"/>
        <dbReference type="ChEBI" id="CHEBI:65315"/>
        <dbReference type="EC" id="5.4.99.12"/>
    </reaction>
</comment>
<comment type="subunit">
    <text evidence="1">Homodimer.</text>
</comment>
<comment type="similarity">
    <text evidence="1">Belongs to the tRNA pseudouridine synthase TruA family.</text>
</comment>
<organism>
    <name type="scientific">Bacillus cereus (strain ATCC 14579 / DSM 31 / CCUG 7414 / JCM 2152 / NBRC 15305 / NCIMB 9373 / NCTC 2599 / NRRL B-3711)</name>
    <dbReference type="NCBI Taxonomy" id="226900"/>
    <lineage>
        <taxon>Bacteria</taxon>
        <taxon>Bacillati</taxon>
        <taxon>Bacillota</taxon>
        <taxon>Bacilli</taxon>
        <taxon>Bacillales</taxon>
        <taxon>Bacillaceae</taxon>
        <taxon>Bacillus</taxon>
        <taxon>Bacillus cereus group</taxon>
    </lineage>
</organism>
<sequence length="245" mass="27993">MHNYKLTIQYDGARFKGWQRLGNNDNTIQGKIESVISEMVGKEIEIIGCSRTDAGVHALNQVANFQSDEKLVEHKVKKYLNQYLPNDISITNVEEVHDRFHARYNSKAKTYLYKIWNEEHTNPFMRKYSMHVNKKLNVKSMKAAAKHLVGSHDFTAFSNAKSKKKSMVREVYTLDVMEEAGFVQIRVSGNGFLHNMVRKIVGALIEVGLGQLDAEAIPNILEEKQRNQINCLAEASGLYLENVEF</sequence>
<protein>
    <recommendedName>
        <fullName evidence="1">tRNA pseudouridine synthase A 2</fullName>
        <ecNumber evidence="1">5.4.99.12</ecNumber>
    </recommendedName>
    <alternativeName>
        <fullName evidence="1">tRNA pseudouridine(38-40) synthase</fullName>
    </alternativeName>
    <alternativeName>
        <fullName evidence="1">tRNA pseudouridylate synthase I 2</fullName>
    </alternativeName>
    <alternativeName>
        <fullName evidence="1">tRNA-uridine isomerase I 2</fullName>
    </alternativeName>
</protein>